<protein>
    <recommendedName>
        <fullName evidence="1">Large ribosomal subunit protein uL30</fullName>
    </recommendedName>
    <alternativeName>
        <fullName evidence="2">50S ribosomal protein L30</fullName>
    </alternativeName>
</protein>
<organism>
    <name type="scientific">Corynebacterium glutamicum (strain R)</name>
    <dbReference type="NCBI Taxonomy" id="340322"/>
    <lineage>
        <taxon>Bacteria</taxon>
        <taxon>Bacillati</taxon>
        <taxon>Actinomycetota</taxon>
        <taxon>Actinomycetes</taxon>
        <taxon>Mycobacteriales</taxon>
        <taxon>Corynebacteriaceae</taxon>
        <taxon>Corynebacterium</taxon>
    </lineage>
</organism>
<sequence length="61" mass="6849">MALKITQIKGTVGTKPKHRDNLRSLGLKRIRHTVIRPDTPEVRGMILAVRHLIVVEEVAGE</sequence>
<dbReference type="EMBL" id="AP009044">
    <property type="protein sequence ID" value="BAF53612.1"/>
    <property type="molecule type" value="Genomic_DNA"/>
</dbReference>
<dbReference type="RefSeq" id="WP_003854348.1">
    <property type="nucleotide sequence ID" value="NC_009342.1"/>
</dbReference>
<dbReference type="SMR" id="A4QBL5"/>
<dbReference type="KEGG" id="cgt:cgR_0641"/>
<dbReference type="HOGENOM" id="CLU_131047_2_0_11"/>
<dbReference type="PhylomeDB" id="A4QBL5"/>
<dbReference type="Proteomes" id="UP000006698">
    <property type="component" value="Chromosome"/>
</dbReference>
<dbReference type="GO" id="GO:0022625">
    <property type="term" value="C:cytosolic large ribosomal subunit"/>
    <property type="evidence" value="ECO:0007669"/>
    <property type="project" value="TreeGrafter"/>
</dbReference>
<dbReference type="GO" id="GO:0003735">
    <property type="term" value="F:structural constituent of ribosome"/>
    <property type="evidence" value="ECO:0007669"/>
    <property type="project" value="InterPro"/>
</dbReference>
<dbReference type="GO" id="GO:0006412">
    <property type="term" value="P:translation"/>
    <property type="evidence" value="ECO:0007669"/>
    <property type="project" value="UniProtKB-UniRule"/>
</dbReference>
<dbReference type="CDD" id="cd01658">
    <property type="entry name" value="Ribosomal_L30"/>
    <property type="match status" value="1"/>
</dbReference>
<dbReference type="Gene3D" id="3.30.1390.20">
    <property type="entry name" value="Ribosomal protein L30, ferredoxin-like fold domain"/>
    <property type="match status" value="1"/>
</dbReference>
<dbReference type="HAMAP" id="MF_01371_B">
    <property type="entry name" value="Ribosomal_uL30_B"/>
    <property type="match status" value="1"/>
</dbReference>
<dbReference type="InterPro" id="IPR036919">
    <property type="entry name" value="Ribo_uL30_ferredoxin-like_sf"/>
</dbReference>
<dbReference type="InterPro" id="IPR005996">
    <property type="entry name" value="Ribosomal_uL30_bac-type"/>
</dbReference>
<dbReference type="InterPro" id="IPR016082">
    <property type="entry name" value="Ribosomal_uL30_ferredoxin-like"/>
</dbReference>
<dbReference type="NCBIfam" id="TIGR01308">
    <property type="entry name" value="rpmD_bact"/>
    <property type="match status" value="1"/>
</dbReference>
<dbReference type="PANTHER" id="PTHR15892:SF2">
    <property type="entry name" value="LARGE RIBOSOMAL SUBUNIT PROTEIN UL30M"/>
    <property type="match status" value="1"/>
</dbReference>
<dbReference type="PANTHER" id="PTHR15892">
    <property type="entry name" value="MITOCHONDRIAL RIBOSOMAL PROTEIN L30"/>
    <property type="match status" value="1"/>
</dbReference>
<dbReference type="Pfam" id="PF00327">
    <property type="entry name" value="Ribosomal_L30"/>
    <property type="match status" value="1"/>
</dbReference>
<dbReference type="PIRSF" id="PIRSF002211">
    <property type="entry name" value="Ribosomal_L30_bac-type"/>
    <property type="match status" value="1"/>
</dbReference>
<dbReference type="SUPFAM" id="SSF55129">
    <property type="entry name" value="Ribosomal protein L30p/L7e"/>
    <property type="match status" value="1"/>
</dbReference>
<reference key="1">
    <citation type="journal article" date="2007" name="Microbiology">
        <title>Comparative analysis of the Corynebacterium glutamicum group and complete genome sequence of strain R.</title>
        <authorList>
            <person name="Yukawa H."/>
            <person name="Omumasaba C.A."/>
            <person name="Nonaka H."/>
            <person name="Kos P."/>
            <person name="Okai N."/>
            <person name="Suzuki N."/>
            <person name="Suda M."/>
            <person name="Tsuge Y."/>
            <person name="Watanabe J."/>
            <person name="Ikeda Y."/>
            <person name="Vertes A.A."/>
            <person name="Inui M."/>
        </authorList>
    </citation>
    <scope>NUCLEOTIDE SEQUENCE [LARGE SCALE GENOMIC DNA]</scope>
    <source>
        <strain>R</strain>
    </source>
</reference>
<accession>A4QBL5</accession>
<name>RL30_CORGB</name>
<feature type="chain" id="PRO_1000056033" description="Large ribosomal subunit protein uL30">
    <location>
        <begin position="1"/>
        <end position="61"/>
    </location>
</feature>
<evidence type="ECO:0000255" key="1">
    <source>
        <dbReference type="HAMAP-Rule" id="MF_01371"/>
    </source>
</evidence>
<evidence type="ECO:0000305" key="2"/>
<gene>
    <name evidence="1" type="primary">rpmD</name>
    <name type="ordered locus">cgR_0641</name>
</gene>
<proteinExistence type="inferred from homology"/>
<comment type="subunit">
    <text evidence="1">Part of the 50S ribosomal subunit.</text>
</comment>
<comment type="similarity">
    <text evidence="1">Belongs to the universal ribosomal protein uL30 family.</text>
</comment>
<keyword id="KW-0687">Ribonucleoprotein</keyword>
<keyword id="KW-0689">Ribosomal protein</keyword>